<accession>Q6SW77</accession>
<accession>D2K3M2</accession>
<evidence type="ECO:0000250" key="1"/>
<evidence type="ECO:0000256" key="2">
    <source>
        <dbReference type="SAM" id="MobiDB-lite"/>
    </source>
</evidence>
<evidence type="ECO:0000305" key="3"/>
<comment type="function">
    <text evidence="1">Replicates viral genomic DNA in the late phase of lytic infection, producing long concatemeric DNA. The replication complex is composed of six viral proteins: the DNA polymerase, processivity factor, primase, primase-associated factor, helicase, and ssDNA-binding protein (By similarity).</text>
</comment>
<comment type="catalytic activity">
    <reaction>
        <text>DNA(n) + a 2'-deoxyribonucleoside 5'-triphosphate = DNA(n+1) + diphosphate</text>
        <dbReference type="Rhea" id="RHEA:22508"/>
        <dbReference type="Rhea" id="RHEA-COMP:17339"/>
        <dbReference type="Rhea" id="RHEA-COMP:17340"/>
        <dbReference type="ChEBI" id="CHEBI:33019"/>
        <dbReference type="ChEBI" id="CHEBI:61560"/>
        <dbReference type="ChEBI" id="CHEBI:173112"/>
        <dbReference type="EC" id="2.7.7.7"/>
    </reaction>
</comment>
<comment type="subunit">
    <text evidence="1">Forms a complex with the ssDNA-binding protein UL57, the DNA polymerase processivity factor UL44, and the alkaline exonuclease UL98. Interacts with the putative helicase-primase complex composed of UL70, UL102 and UL105 proteins; these interactions may coordinate leading and lagging strand DNA synthesis at the replication fork (By similarity).</text>
</comment>
<comment type="subcellular location">
    <subcellularLocation>
        <location evidence="1">Host nucleus</location>
    </subcellularLocation>
    <text evidence="1">the protein is present at discrete sites in nuclei, called replication compartments where viral DNA replication occurs.</text>
</comment>
<comment type="similarity">
    <text evidence="3">Belongs to the DNA polymerase type-B family.</text>
</comment>
<dbReference type="EC" id="2.7.7.7"/>
<dbReference type="EMBL" id="AY446894">
    <property type="protein sequence ID" value="AAR31619.1"/>
    <property type="molecule type" value="Genomic_DNA"/>
</dbReference>
<dbReference type="RefSeq" id="YP_081513.1">
    <property type="nucleotide sequence ID" value="NC_006273.2"/>
</dbReference>
<dbReference type="SMR" id="Q6SW77"/>
<dbReference type="DNASU" id="3077501"/>
<dbReference type="GeneID" id="3077501"/>
<dbReference type="KEGG" id="vg:3077501"/>
<dbReference type="Reactome" id="R-HSA-9609690">
    <property type="pathway name" value="HCMV Early Events"/>
</dbReference>
<dbReference type="Reactome" id="R-HSA-9610379">
    <property type="pathway name" value="HCMV Late Events"/>
</dbReference>
<dbReference type="Proteomes" id="UP000000938">
    <property type="component" value="Segment"/>
</dbReference>
<dbReference type="GO" id="GO:0042025">
    <property type="term" value="C:host cell nucleus"/>
    <property type="evidence" value="ECO:0007669"/>
    <property type="project" value="UniProtKB-SubCell"/>
</dbReference>
<dbReference type="GO" id="GO:0019033">
    <property type="term" value="C:viral tegument"/>
    <property type="evidence" value="ECO:0000304"/>
    <property type="project" value="Reactome"/>
</dbReference>
<dbReference type="GO" id="GO:0003677">
    <property type="term" value="F:DNA binding"/>
    <property type="evidence" value="ECO:0007669"/>
    <property type="project" value="UniProtKB-KW"/>
</dbReference>
<dbReference type="GO" id="GO:0003887">
    <property type="term" value="F:DNA-directed DNA polymerase activity"/>
    <property type="evidence" value="ECO:0007669"/>
    <property type="project" value="UniProtKB-KW"/>
</dbReference>
<dbReference type="GO" id="GO:0000166">
    <property type="term" value="F:nucleotide binding"/>
    <property type="evidence" value="ECO:0007669"/>
    <property type="project" value="InterPro"/>
</dbReference>
<dbReference type="GO" id="GO:0006261">
    <property type="term" value="P:DNA-templated DNA replication"/>
    <property type="evidence" value="ECO:0007669"/>
    <property type="project" value="TreeGrafter"/>
</dbReference>
<dbReference type="GO" id="GO:0039693">
    <property type="term" value="P:viral DNA genome replication"/>
    <property type="evidence" value="ECO:0007669"/>
    <property type="project" value="UniProtKB-KW"/>
</dbReference>
<dbReference type="Gene3D" id="1.10.132.60">
    <property type="entry name" value="DNA polymerase family B, C-terminal domain"/>
    <property type="match status" value="1"/>
</dbReference>
<dbReference type="Gene3D" id="3.30.342.10">
    <property type="entry name" value="DNA Polymerase, chain B, domain 1"/>
    <property type="match status" value="1"/>
</dbReference>
<dbReference type="Gene3D" id="1.10.287.690">
    <property type="entry name" value="Helix hairpin bin"/>
    <property type="match status" value="1"/>
</dbReference>
<dbReference type="Gene3D" id="3.90.1600.10">
    <property type="entry name" value="Palm domain of DNA polymerase"/>
    <property type="match status" value="1"/>
</dbReference>
<dbReference type="Gene3D" id="3.30.420.10">
    <property type="entry name" value="Ribonuclease H-like superfamily/Ribonuclease H"/>
    <property type="match status" value="1"/>
</dbReference>
<dbReference type="InterPro" id="IPR006172">
    <property type="entry name" value="DNA-dir_DNA_pol_B"/>
</dbReference>
<dbReference type="InterPro" id="IPR017964">
    <property type="entry name" value="DNA-dir_DNA_pol_B_CS"/>
</dbReference>
<dbReference type="InterPro" id="IPR006133">
    <property type="entry name" value="DNA-dir_DNA_pol_B_exonuc"/>
</dbReference>
<dbReference type="InterPro" id="IPR006134">
    <property type="entry name" value="DNA-dir_DNA_pol_B_multi_dom"/>
</dbReference>
<dbReference type="InterPro" id="IPR043502">
    <property type="entry name" value="DNA/RNA_pol_sf"/>
</dbReference>
<dbReference type="InterPro" id="IPR042087">
    <property type="entry name" value="DNA_pol_B_thumb"/>
</dbReference>
<dbReference type="InterPro" id="IPR023211">
    <property type="entry name" value="DNA_pol_palm_dom_sf"/>
</dbReference>
<dbReference type="InterPro" id="IPR050240">
    <property type="entry name" value="DNA_pol_type-B"/>
</dbReference>
<dbReference type="InterPro" id="IPR012337">
    <property type="entry name" value="RNaseH-like_sf"/>
</dbReference>
<dbReference type="InterPro" id="IPR036397">
    <property type="entry name" value="RNaseH_sf"/>
</dbReference>
<dbReference type="PANTHER" id="PTHR10322">
    <property type="entry name" value="DNA POLYMERASE CATALYTIC SUBUNIT"/>
    <property type="match status" value="1"/>
</dbReference>
<dbReference type="PANTHER" id="PTHR10322:SF23">
    <property type="entry name" value="DNA POLYMERASE DELTA CATALYTIC SUBUNIT"/>
    <property type="match status" value="1"/>
</dbReference>
<dbReference type="Pfam" id="PF00136">
    <property type="entry name" value="DNA_pol_B"/>
    <property type="match status" value="1"/>
</dbReference>
<dbReference type="Pfam" id="PF03104">
    <property type="entry name" value="DNA_pol_B_exo1"/>
    <property type="match status" value="1"/>
</dbReference>
<dbReference type="PRINTS" id="PR00106">
    <property type="entry name" value="DNAPOLB"/>
</dbReference>
<dbReference type="SMART" id="SM00486">
    <property type="entry name" value="POLBc"/>
    <property type="match status" value="1"/>
</dbReference>
<dbReference type="SUPFAM" id="SSF56672">
    <property type="entry name" value="DNA/RNA polymerases"/>
    <property type="match status" value="1"/>
</dbReference>
<dbReference type="SUPFAM" id="SSF53098">
    <property type="entry name" value="Ribonuclease H-like"/>
    <property type="match status" value="1"/>
</dbReference>
<dbReference type="PROSITE" id="PS00116">
    <property type="entry name" value="DNA_POLYMERASE_B"/>
    <property type="match status" value="1"/>
</dbReference>
<name>DPOL_HCMVM</name>
<keyword id="KW-0235">DNA replication</keyword>
<keyword id="KW-0238">DNA-binding</keyword>
<keyword id="KW-0239">DNA-directed DNA polymerase</keyword>
<keyword id="KW-0244">Early protein</keyword>
<keyword id="KW-1048">Host nucleus</keyword>
<keyword id="KW-0548">Nucleotidyltransferase</keyword>
<keyword id="KW-1185">Reference proteome</keyword>
<keyword id="KW-0808">Transferase</keyword>
<keyword id="KW-1194">Viral DNA replication</keyword>
<proteinExistence type="inferred from homology"/>
<feature type="chain" id="PRO_0000417828" description="DNA polymerase catalytic subunit">
    <location>
        <begin position="1"/>
        <end position="1242"/>
    </location>
</feature>
<feature type="region of interest" description="Disordered" evidence="2">
    <location>
        <begin position="14"/>
        <end position="38"/>
    </location>
</feature>
<feature type="region of interest" description="Disordered" evidence="2">
    <location>
        <begin position="644"/>
        <end position="665"/>
    </location>
</feature>
<feature type="region of interest" description="Disordered" evidence="2">
    <location>
        <begin position="1109"/>
        <end position="1162"/>
    </location>
</feature>
<feature type="compositionally biased region" description="Low complexity" evidence="2">
    <location>
        <begin position="653"/>
        <end position="665"/>
    </location>
</feature>
<feature type="compositionally biased region" description="Polar residues" evidence="2">
    <location>
        <begin position="1111"/>
        <end position="1125"/>
    </location>
</feature>
<feature type="compositionally biased region" description="Basic and acidic residues" evidence="2">
    <location>
        <begin position="1145"/>
        <end position="1155"/>
    </location>
</feature>
<organismHost>
    <name type="scientific">Homo sapiens</name>
    <name type="common">Human</name>
    <dbReference type="NCBI Taxonomy" id="9606"/>
</organismHost>
<organism>
    <name type="scientific">Human cytomegalovirus (strain Merlin)</name>
    <name type="common">HHV-5</name>
    <name type="synonym">Human herpesvirus 5</name>
    <dbReference type="NCBI Taxonomy" id="295027"/>
    <lineage>
        <taxon>Viruses</taxon>
        <taxon>Duplodnaviria</taxon>
        <taxon>Heunggongvirae</taxon>
        <taxon>Peploviricota</taxon>
        <taxon>Herviviricetes</taxon>
        <taxon>Herpesvirales</taxon>
        <taxon>Orthoherpesviridae</taxon>
        <taxon>Betaherpesvirinae</taxon>
        <taxon>Cytomegalovirus</taxon>
        <taxon>Cytomegalovirus humanbeta5</taxon>
        <taxon>Human cytomegalovirus</taxon>
    </lineage>
</organism>
<gene>
    <name type="primary">UL54</name>
</gene>
<reference key="1">
    <citation type="journal article" date="2004" name="J. Gen. Virol.">
        <title>Genetic content of wild-type human cytomegalovirus.</title>
        <authorList>
            <person name="Dolan A."/>
            <person name="Cunningham C."/>
            <person name="Hector R.D."/>
            <person name="Hassan-Walker A.F."/>
            <person name="Lee L."/>
            <person name="Addison C."/>
            <person name="Dargan D.J."/>
            <person name="McGeoch D.J."/>
            <person name="Gatherer D."/>
            <person name="Emery V.C."/>
            <person name="Griffiths P.D."/>
            <person name="Sinzger C."/>
            <person name="McSharry B.P."/>
            <person name="Wilkinson G.W.G."/>
            <person name="Davison A.J."/>
        </authorList>
    </citation>
    <scope>NUCLEOTIDE SEQUENCE [LARGE SCALE GENOMIC DNA]</scope>
</reference>
<sequence length="1242" mass="137158">MFFNPYLSGGVTGGAVAGGRRQRSQPGSAQGSGKRPPQKQFLQIVPRGVMFDGQTGLIKHKTGRLPLMFYREIKHLLSHDMVWPCPWRETLVGRVVGPIRFHTYDQTDAVLFFDSPENVSPRYRQHLVPSGNVLRFFGATEHGYSICVNVFGQRSYFYCEYSDTDRLREVIASVGELVPEPRTPYAVSVTPATKTSIYGYGTRPVPDLQCVSISNWTMARKIGEYLLEQGFPVYEVRVDPLTRLVIDRRITTFGWCSVNRYDWRQQGRASTCDIEVDCDVSDLVAVPDDSSWPRYRCLSFDIECMSGEGGFPCAEKSDDIVIQISCVCYETGGNTAVDQGIPNGNDGRGCTSEGVIFGHSGLHLFTIGTCGQVGPDVDVYEFPSEYELLLGFMLFFQRYAPAFVTGYNINSFDLKYILTRLEYLYKVDSQRFCKLPTAQGGRFFLHSPAVGFKRQYAAAFPSASHNNPASTAATKVYIAGSVVIDMYPVCMAKTNSPNYKLNTMAELYLRQRKDDLSYKDIPRCFVANAEGRAQVGRYCLQDAVLVRDLFNTINFHYEAGAIARLAKIPLRRVIFDGQQIRIYTSLLDECACRDFILPNHYSKGTTVPETNSVAVSPNAAIISTAAVPGDAGSVAAMFQMSPPLQSAPSSQDGVSPGSGSNSSSSVGVFSVGSGSSGGVGVSNDNHGAGGTAAVSYQGATVFEPEVGYYNDPVAVFDFASLYPSIIMAHNLCYSTLLVPGGEYPVDPADVYSVTLENGVTHRFVRASVRVSVLSELLNKWVSQRRAVRECMRECQDPVRRMLLDKEQMALKVTCNAFYGFTGVVNGMMPCLPIAASITRIGRDMLERTARFIKDNFSEPCFLHNFFNQEDYVVGTREGDSEESSTLPEGLETSSGGLNERRVEARVIYGDTDSVFVRFRGLTPQALVARGPSLAHYVTACLFVEPVKLEFEKVFVSLMMICKKRYIGKVEGASGLSMKGVDLVRKTACEFVKGVTRDVLSLLFEDREVSEAAVRLSRLSLDEVKKYGVPRGFWRILRRLVQARDDLYLHRVRVEDLVLSSVLSKDISLYRQSNLPHIAVIKRLAARSEELPSVGDRVFYVLTAPGVRAAPQGSSDNGDSVTTGVVSRSDAIDGTDDDADGGGVEESNRRGGEPAKKRARKPPSAVCNYEVAEDPSYVREHGVPIHADKYFEQVLKAVTNVLSPVFPGGETARKDKFLHMVLPRRLHLEPAFLPYSVKAHECC</sequence>
<protein>
    <recommendedName>
        <fullName>DNA polymerase catalytic subunit</fullName>
        <ecNumber>2.7.7.7</ecNumber>
    </recommendedName>
</protein>